<protein>
    <recommendedName>
        <fullName evidence="1">Large ribosomal subunit protein uL22</fullName>
    </recommendedName>
    <alternativeName>
        <fullName>60S ribosomal protein L17</fullName>
    </alternativeName>
</protein>
<evidence type="ECO:0000305" key="1"/>
<proteinExistence type="evidence at transcript level"/>
<keyword id="KW-0687">Ribonucleoprotein</keyword>
<keyword id="KW-0689">Ribosomal protein</keyword>
<accession>P37380</accession>
<sequence>MGKYSIDPENPIKSCKARGSYLRVHFKNTRETAQAIKKMHIRKAYRYLKDVIAKKQIIPFRRFCGGVGRKAQAKAFKHTQGRWPVKSAEFLLGLLKNAESNADVKGLDVDSLVIDHIQVNRAPYMRRRTYRAHGRINPYMSSPCHIEMIVSEKEQVVPRAEEEVEVKKVSKKKLAREKLKARE</sequence>
<organism>
    <name type="scientific">Podocoryna carnea</name>
    <name type="common">Hydrozoan</name>
    <dbReference type="NCBI Taxonomy" id="6096"/>
    <lineage>
        <taxon>Eukaryota</taxon>
        <taxon>Metazoa</taxon>
        <taxon>Cnidaria</taxon>
        <taxon>Hydrozoa</taxon>
        <taxon>Hydroidolina</taxon>
        <taxon>Anthoathecata</taxon>
        <taxon>Filifera</taxon>
        <taxon>Hydractiniidae</taxon>
        <taxon>Podocoryna</taxon>
    </lineage>
</organism>
<gene>
    <name type="primary">RPL17</name>
</gene>
<reference key="1">
    <citation type="journal article" date="1993" name="Nucleic Acids Res.">
        <title>Cloning and analysis of the L17 ribosomal protein cDNA from Podocoryne carnea (Coelenterata, Hydrozoa).</title>
        <authorList>
            <person name="Aerne B.L."/>
            <person name="Baader C.D."/>
            <person name="Schmid V."/>
            <person name="Schuchert P."/>
        </authorList>
    </citation>
    <scope>NUCLEOTIDE SEQUENCE [MRNA]</scope>
</reference>
<comment type="similarity">
    <text evidence="1">Belongs to the universal ribosomal protein uL22 family.</text>
</comment>
<feature type="chain" id="PRO_0000125335" description="Large ribosomal subunit protein uL22">
    <location>
        <begin position="1"/>
        <end position="183"/>
    </location>
</feature>
<name>RL17_PODCA</name>
<dbReference type="EMBL" id="X71382">
    <property type="protein sequence ID" value="CAA50504.1"/>
    <property type="molecule type" value="mRNA"/>
</dbReference>
<dbReference type="PIR" id="S34122">
    <property type="entry name" value="S34122"/>
</dbReference>
<dbReference type="SMR" id="P37380"/>
<dbReference type="GO" id="GO:0022625">
    <property type="term" value="C:cytosolic large ribosomal subunit"/>
    <property type="evidence" value="ECO:0007669"/>
    <property type="project" value="TreeGrafter"/>
</dbReference>
<dbReference type="GO" id="GO:0003735">
    <property type="term" value="F:structural constituent of ribosome"/>
    <property type="evidence" value="ECO:0007669"/>
    <property type="project" value="InterPro"/>
</dbReference>
<dbReference type="GO" id="GO:0002181">
    <property type="term" value="P:cytoplasmic translation"/>
    <property type="evidence" value="ECO:0007669"/>
    <property type="project" value="TreeGrafter"/>
</dbReference>
<dbReference type="CDD" id="cd00336">
    <property type="entry name" value="Ribosomal_L22"/>
    <property type="match status" value="1"/>
</dbReference>
<dbReference type="FunFam" id="3.90.470.10:FF:000003">
    <property type="entry name" value="60S ribosomal protein L17"/>
    <property type="match status" value="1"/>
</dbReference>
<dbReference type="Gene3D" id="3.90.470.10">
    <property type="entry name" value="Ribosomal protein L22/L17"/>
    <property type="match status" value="1"/>
</dbReference>
<dbReference type="InterPro" id="IPR001063">
    <property type="entry name" value="Ribosomal_uL22"/>
</dbReference>
<dbReference type="InterPro" id="IPR018260">
    <property type="entry name" value="Ribosomal_uL22_CS"/>
</dbReference>
<dbReference type="InterPro" id="IPR005721">
    <property type="entry name" value="Ribosomal_uL22_euk/arc"/>
</dbReference>
<dbReference type="InterPro" id="IPR036394">
    <property type="entry name" value="Ribosomal_uL22_sf"/>
</dbReference>
<dbReference type="NCBIfam" id="NF003260">
    <property type="entry name" value="PRK04223.1"/>
    <property type="match status" value="1"/>
</dbReference>
<dbReference type="NCBIfam" id="TIGR01038">
    <property type="entry name" value="uL22_arch_euk"/>
    <property type="match status" value="1"/>
</dbReference>
<dbReference type="PANTHER" id="PTHR11593">
    <property type="entry name" value="60S RIBOSOMAL PROTEIN L17"/>
    <property type="match status" value="1"/>
</dbReference>
<dbReference type="PANTHER" id="PTHR11593:SF10">
    <property type="entry name" value="60S RIBOSOMAL PROTEIN L17"/>
    <property type="match status" value="1"/>
</dbReference>
<dbReference type="Pfam" id="PF00237">
    <property type="entry name" value="Ribosomal_L22"/>
    <property type="match status" value="1"/>
</dbReference>
<dbReference type="SUPFAM" id="SSF54843">
    <property type="entry name" value="Ribosomal protein L22"/>
    <property type="match status" value="1"/>
</dbReference>
<dbReference type="PROSITE" id="PS00464">
    <property type="entry name" value="RIBOSOMAL_L22"/>
    <property type="match status" value="1"/>
</dbReference>